<name>SYI_FRATW</name>
<proteinExistence type="inferred from homology"/>
<dbReference type="EC" id="6.1.1.5" evidence="1"/>
<dbReference type="EMBL" id="CP000608">
    <property type="protein sequence ID" value="ABO47042.1"/>
    <property type="molecule type" value="Genomic_DNA"/>
</dbReference>
<dbReference type="RefSeq" id="WP_003026501.1">
    <property type="nucleotide sequence ID" value="NC_009257.1"/>
</dbReference>
<dbReference type="SMR" id="A4IYP1"/>
<dbReference type="KEGG" id="ftw:FTW_1264"/>
<dbReference type="HOGENOM" id="CLU_001493_7_0_6"/>
<dbReference type="GO" id="GO:0005829">
    <property type="term" value="C:cytosol"/>
    <property type="evidence" value="ECO:0007669"/>
    <property type="project" value="TreeGrafter"/>
</dbReference>
<dbReference type="GO" id="GO:0002161">
    <property type="term" value="F:aminoacyl-tRNA deacylase activity"/>
    <property type="evidence" value="ECO:0007669"/>
    <property type="project" value="InterPro"/>
</dbReference>
<dbReference type="GO" id="GO:0005524">
    <property type="term" value="F:ATP binding"/>
    <property type="evidence" value="ECO:0007669"/>
    <property type="project" value="UniProtKB-UniRule"/>
</dbReference>
<dbReference type="GO" id="GO:0004822">
    <property type="term" value="F:isoleucine-tRNA ligase activity"/>
    <property type="evidence" value="ECO:0007669"/>
    <property type="project" value="UniProtKB-UniRule"/>
</dbReference>
<dbReference type="GO" id="GO:0000049">
    <property type="term" value="F:tRNA binding"/>
    <property type="evidence" value="ECO:0007669"/>
    <property type="project" value="InterPro"/>
</dbReference>
<dbReference type="GO" id="GO:0008270">
    <property type="term" value="F:zinc ion binding"/>
    <property type="evidence" value="ECO:0007669"/>
    <property type="project" value="UniProtKB-UniRule"/>
</dbReference>
<dbReference type="GO" id="GO:0006428">
    <property type="term" value="P:isoleucyl-tRNA aminoacylation"/>
    <property type="evidence" value="ECO:0007669"/>
    <property type="project" value="UniProtKB-UniRule"/>
</dbReference>
<dbReference type="CDD" id="cd07960">
    <property type="entry name" value="Anticodon_Ia_Ile_BEm"/>
    <property type="match status" value="1"/>
</dbReference>
<dbReference type="CDD" id="cd00818">
    <property type="entry name" value="IleRS_core"/>
    <property type="match status" value="1"/>
</dbReference>
<dbReference type="FunFam" id="1.10.730.20:FF:000001">
    <property type="entry name" value="Isoleucine--tRNA ligase"/>
    <property type="match status" value="1"/>
</dbReference>
<dbReference type="FunFam" id="3.40.50.620:FF:000042">
    <property type="entry name" value="Isoleucine--tRNA ligase"/>
    <property type="match status" value="1"/>
</dbReference>
<dbReference type="FunFam" id="3.40.50.620:FF:000048">
    <property type="entry name" value="Isoleucine--tRNA ligase"/>
    <property type="match status" value="1"/>
</dbReference>
<dbReference type="Gene3D" id="1.10.730.20">
    <property type="match status" value="1"/>
</dbReference>
<dbReference type="Gene3D" id="3.40.50.620">
    <property type="entry name" value="HUPs"/>
    <property type="match status" value="2"/>
</dbReference>
<dbReference type="Gene3D" id="3.90.740.10">
    <property type="entry name" value="Valyl/Leucyl/Isoleucyl-tRNA synthetase, editing domain"/>
    <property type="match status" value="1"/>
</dbReference>
<dbReference type="HAMAP" id="MF_02002">
    <property type="entry name" value="Ile_tRNA_synth_type1"/>
    <property type="match status" value="1"/>
</dbReference>
<dbReference type="InterPro" id="IPR001412">
    <property type="entry name" value="aa-tRNA-synth_I_CS"/>
</dbReference>
<dbReference type="InterPro" id="IPR002300">
    <property type="entry name" value="aa-tRNA-synth_Ia"/>
</dbReference>
<dbReference type="InterPro" id="IPR033708">
    <property type="entry name" value="Anticodon_Ile_BEm"/>
</dbReference>
<dbReference type="InterPro" id="IPR002301">
    <property type="entry name" value="Ile-tRNA-ligase"/>
</dbReference>
<dbReference type="InterPro" id="IPR023585">
    <property type="entry name" value="Ile-tRNA-ligase_type1"/>
</dbReference>
<dbReference type="InterPro" id="IPR050081">
    <property type="entry name" value="Ile-tRNA_ligase"/>
</dbReference>
<dbReference type="InterPro" id="IPR013155">
    <property type="entry name" value="M/V/L/I-tRNA-synth_anticd-bd"/>
</dbReference>
<dbReference type="InterPro" id="IPR014729">
    <property type="entry name" value="Rossmann-like_a/b/a_fold"/>
</dbReference>
<dbReference type="InterPro" id="IPR009080">
    <property type="entry name" value="tRNAsynth_Ia_anticodon-bd"/>
</dbReference>
<dbReference type="InterPro" id="IPR009008">
    <property type="entry name" value="Val/Leu/Ile-tRNA-synth_edit"/>
</dbReference>
<dbReference type="InterPro" id="IPR010663">
    <property type="entry name" value="Znf_FPG/IleRS"/>
</dbReference>
<dbReference type="NCBIfam" id="TIGR00392">
    <property type="entry name" value="ileS"/>
    <property type="match status" value="1"/>
</dbReference>
<dbReference type="PANTHER" id="PTHR42765:SF1">
    <property type="entry name" value="ISOLEUCINE--TRNA LIGASE, MITOCHONDRIAL"/>
    <property type="match status" value="1"/>
</dbReference>
<dbReference type="PANTHER" id="PTHR42765">
    <property type="entry name" value="SOLEUCYL-TRNA SYNTHETASE"/>
    <property type="match status" value="1"/>
</dbReference>
<dbReference type="Pfam" id="PF08264">
    <property type="entry name" value="Anticodon_1"/>
    <property type="match status" value="1"/>
</dbReference>
<dbReference type="Pfam" id="PF00133">
    <property type="entry name" value="tRNA-synt_1"/>
    <property type="match status" value="1"/>
</dbReference>
<dbReference type="Pfam" id="PF06827">
    <property type="entry name" value="zf-FPG_IleRS"/>
    <property type="match status" value="1"/>
</dbReference>
<dbReference type="PRINTS" id="PR00984">
    <property type="entry name" value="TRNASYNTHILE"/>
</dbReference>
<dbReference type="SUPFAM" id="SSF47323">
    <property type="entry name" value="Anticodon-binding domain of a subclass of class I aminoacyl-tRNA synthetases"/>
    <property type="match status" value="1"/>
</dbReference>
<dbReference type="SUPFAM" id="SSF52374">
    <property type="entry name" value="Nucleotidylyl transferase"/>
    <property type="match status" value="1"/>
</dbReference>
<dbReference type="SUPFAM" id="SSF50677">
    <property type="entry name" value="ValRS/IleRS/LeuRS editing domain"/>
    <property type="match status" value="1"/>
</dbReference>
<dbReference type="PROSITE" id="PS00178">
    <property type="entry name" value="AA_TRNA_LIGASE_I"/>
    <property type="match status" value="1"/>
</dbReference>
<gene>
    <name evidence="1" type="primary">ileS</name>
    <name type="ordered locus">FTW_1264</name>
</gene>
<protein>
    <recommendedName>
        <fullName evidence="1">Isoleucine--tRNA ligase</fullName>
        <ecNumber evidence="1">6.1.1.5</ecNumber>
    </recommendedName>
    <alternativeName>
        <fullName evidence="1">Isoleucyl-tRNA synthetase</fullName>
        <shortName evidence="1">IleRS</shortName>
    </alternativeName>
</protein>
<keyword id="KW-0030">Aminoacyl-tRNA synthetase</keyword>
<keyword id="KW-0067">ATP-binding</keyword>
<keyword id="KW-0963">Cytoplasm</keyword>
<keyword id="KW-0436">Ligase</keyword>
<keyword id="KW-0479">Metal-binding</keyword>
<keyword id="KW-0547">Nucleotide-binding</keyword>
<keyword id="KW-0648">Protein biosynthesis</keyword>
<keyword id="KW-0862">Zinc</keyword>
<feature type="chain" id="PRO_1000022070" description="Isoleucine--tRNA ligase">
    <location>
        <begin position="1"/>
        <end position="935"/>
    </location>
</feature>
<feature type="short sequence motif" description="'HIGH' region">
    <location>
        <begin position="58"/>
        <end position="68"/>
    </location>
</feature>
<feature type="short sequence motif" description="'KMSKS' region">
    <location>
        <begin position="599"/>
        <end position="603"/>
    </location>
</feature>
<feature type="binding site" evidence="1">
    <location>
        <position position="558"/>
    </location>
    <ligand>
        <name>L-isoleucyl-5'-AMP</name>
        <dbReference type="ChEBI" id="CHEBI:178002"/>
    </ligand>
</feature>
<feature type="binding site" evidence="1">
    <location>
        <position position="602"/>
    </location>
    <ligand>
        <name>ATP</name>
        <dbReference type="ChEBI" id="CHEBI:30616"/>
    </ligand>
</feature>
<feature type="binding site" evidence="1">
    <location>
        <position position="897"/>
    </location>
    <ligand>
        <name>Zn(2+)</name>
        <dbReference type="ChEBI" id="CHEBI:29105"/>
    </ligand>
</feature>
<feature type="binding site" evidence="1">
    <location>
        <position position="900"/>
    </location>
    <ligand>
        <name>Zn(2+)</name>
        <dbReference type="ChEBI" id="CHEBI:29105"/>
    </ligand>
</feature>
<feature type="binding site" evidence="1">
    <location>
        <position position="917"/>
    </location>
    <ligand>
        <name>Zn(2+)</name>
        <dbReference type="ChEBI" id="CHEBI:29105"/>
    </ligand>
</feature>
<feature type="binding site" evidence="1">
    <location>
        <position position="920"/>
    </location>
    <ligand>
        <name>Zn(2+)</name>
        <dbReference type="ChEBI" id="CHEBI:29105"/>
    </ligand>
</feature>
<comment type="function">
    <text evidence="1">Catalyzes the attachment of isoleucine to tRNA(Ile). As IleRS can inadvertently accommodate and process structurally similar amino acids such as valine, to avoid such errors it has two additional distinct tRNA(Ile)-dependent editing activities. One activity is designated as 'pretransfer' editing and involves the hydrolysis of activated Val-AMP. The other activity is designated 'posttransfer' editing and involves deacylation of mischarged Val-tRNA(Ile).</text>
</comment>
<comment type="catalytic activity">
    <reaction evidence="1">
        <text>tRNA(Ile) + L-isoleucine + ATP = L-isoleucyl-tRNA(Ile) + AMP + diphosphate</text>
        <dbReference type="Rhea" id="RHEA:11060"/>
        <dbReference type="Rhea" id="RHEA-COMP:9666"/>
        <dbReference type="Rhea" id="RHEA-COMP:9695"/>
        <dbReference type="ChEBI" id="CHEBI:30616"/>
        <dbReference type="ChEBI" id="CHEBI:33019"/>
        <dbReference type="ChEBI" id="CHEBI:58045"/>
        <dbReference type="ChEBI" id="CHEBI:78442"/>
        <dbReference type="ChEBI" id="CHEBI:78528"/>
        <dbReference type="ChEBI" id="CHEBI:456215"/>
        <dbReference type="EC" id="6.1.1.5"/>
    </reaction>
</comment>
<comment type="cofactor">
    <cofactor evidence="1">
        <name>Zn(2+)</name>
        <dbReference type="ChEBI" id="CHEBI:29105"/>
    </cofactor>
    <text evidence="1">Binds 1 zinc ion per subunit.</text>
</comment>
<comment type="subunit">
    <text evidence="1">Monomer.</text>
</comment>
<comment type="subcellular location">
    <subcellularLocation>
        <location evidence="1">Cytoplasm</location>
    </subcellularLocation>
</comment>
<comment type="domain">
    <text evidence="1">IleRS has two distinct active sites: one for aminoacylation and one for editing. The misactivated valine is translocated from the active site to the editing site, which sterically excludes the correctly activated isoleucine. The single editing site contains two valyl binding pockets, one specific for each substrate (Val-AMP or Val-tRNA(Ile)).</text>
</comment>
<comment type="similarity">
    <text evidence="1">Belongs to the class-I aminoacyl-tRNA synthetase family. IleS type 1 subfamily.</text>
</comment>
<organism>
    <name type="scientific">Francisella tularensis subsp. tularensis (strain WY96-3418)</name>
    <dbReference type="NCBI Taxonomy" id="418136"/>
    <lineage>
        <taxon>Bacteria</taxon>
        <taxon>Pseudomonadati</taxon>
        <taxon>Pseudomonadota</taxon>
        <taxon>Gammaproteobacteria</taxon>
        <taxon>Thiotrichales</taxon>
        <taxon>Francisellaceae</taxon>
        <taxon>Francisella</taxon>
    </lineage>
</organism>
<accession>A4IYP1</accession>
<evidence type="ECO:0000255" key="1">
    <source>
        <dbReference type="HAMAP-Rule" id="MF_02002"/>
    </source>
</evidence>
<reference key="1">
    <citation type="journal article" date="2007" name="PLoS ONE">
        <title>Complete genomic characterization of a pathogenic A.II strain of Francisella tularensis subspecies tularensis.</title>
        <authorList>
            <person name="Beckstrom-Sternberg S.M."/>
            <person name="Auerbach R.K."/>
            <person name="Godbole S."/>
            <person name="Pearson J.V."/>
            <person name="Beckstrom-Sternberg J.S."/>
            <person name="Deng Z."/>
            <person name="Munk C."/>
            <person name="Kubota K."/>
            <person name="Zhou Y."/>
            <person name="Bruce D."/>
            <person name="Noronha J."/>
            <person name="Scheuermann R.H."/>
            <person name="Wang A."/>
            <person name="Wei X."/>
            <person name="Wang J."/>
            <person name="Hao J."/>
            <person name="Wagner D.M."/>
            <person name="Brettin T.S."/>
            <person name="Brown N."/>
            <person name="Gilna P."/>
            <person name="Keim P.S."/>
        </authorList>
    </citation>
    <scope>NUCLEOTIDE SEQUENCE [LARGE SCALE GENOMIC DNA]</scope>
    <source>
        <strain>WY96-3418</strain>
    </source>
</reference>
<sequence length="935" mass="106934">MSDYKDTLNLPKTSFSMKGNLANKEPMILNKWEKQGIYKKIREHFAGREKFVLHDGPPYANGSIHVGHAVNKILKDIIIKSKTLSGYDAPFTPTWDCHGLPIELQVEKKHGKAGQSISEDDFRKECRKYAKKQVEIQKKDFKRLGVLGDWEQPYLTINFDYEANMIRTLAKIIENGHLSKGFKPVHWCTDCGSALAEAEVEYADKVSPAIDVKFKIKDKDKLAQAFGLDSLNHDAFAIIWTTTPWTLPANQAIAVNNQLNYSLIKIEDFYIILAENLVEQTLKRYAIENAQIIATTTGNKLTGIIAEHPFYSRHVPILHGDHVTDDSGTGLVHTAPTHGVDDFTLGKEHNLSMEIFVKGNGCYSENTKLFAGEFIFKANDRIIELLGEKKRLMNSDKIKHSYPHCWRHKTPLMFRATPQWFISMEKQGLRDKALQAIKETSWAPSWGQARIEGMVKDRPDWCISRQRTWGVPLPLFIHKETEELHPNTIEILHKVAEKIEKDGIEAWFNADDCEFITETAQYKSVKDTLDVWFDSGSSSMCILDLDKRLSYPADLYLEGSDQHRGWFQTSLLVAMSAKGSQPYKEVFTHGFVVDEHGRKMSKSLGNVTSPQDIYNTLGADILRLWTASTDYKSEMAVSDQILKRTADTYRRLRNTARFLLSNLDGFNPVTDIIEFDKLVKLDQWAIAKTKEFQDKIIEAYDKYQTHTVAQLIHHFCSIEMGSFYLDIIKDRQYTAKTDGHPRKSAQTAIYHIVHALVRWMAPILSFTANEIWDATPKTTDLPIQLCEWYTGLKSFDQDAELDLEYWAKIQEIRSEVNRVLEIKRNEDVIKASLEAEITIYADKYNYKLLEKLGNELRFLLISSKADLKVIEESTSSSIAANIPGLLIEITKIEEPKCERCWHRSSTVGDNPQYKDICSRCVENITTEAGESREFA</sequence>